<accession>Q1B1U6</accession>
<protein>
    <recommendedName>
        <fullName>Prephenate dehydratase</fullName>
        <shortName>PDT</shortName>
        <ecNumber>4.2.1.51</ecNumber>
    </recommendedName>
</protein>
<feature type="chain" id="PRO_0000382042" description="Prephenate dehydratase">
    <location>
        <begin position="1"/>
        <end position="315"/>
    </location>
</feature>
<feature type="domain" description="Prephenate dehydratase" evidence="2">
    <location>
        <begin position="3"/>
        <end position="190"/>
    </location>
</feature>
<feature type="domain" description="ACT" evidence="3">
    <location>
        <begin position="204"/>
        <end position="281"/>
    </location>
</feature>
<feature type="site" description="Essential for activity" evidence="1">
    <location>
        <position position="183"/>
    </location>
</feature>
<proteinExistence type="inferred from homology"/>
<gene>
    <name type="primary">pheA</name>
    <name type="ordered locus">Mmcs_5034</name>
</gene>
<sequence length="315" mass="32736">MPRIAYLGPQGTFTESALLQMISGAMVPGGDADDTAVTPVPTDSTPAGLEAVRSGAADYACVPIENSIEGSVLPTLDSLAVGAPLQIFAELTLAVSFSIVVRPDHDGDVGTVAAFPVAAAQVRRWLAEHLPAAQLVPAHSNAAAAADVAGGRADAGISTALAAERYGLRSLAAGVVDEPNARTRFVLVGRPAPPPARTGADRTSVALRLPNTPGALVAAMTELSIRDIDLTRIESRPTRTELGTYVFFLDCVGHLEDDAVAEALKALHRRCEDVRYLGSWPTGTAAGAPPPSSDEATRWLTRLREGLPTPPEGGR</sequence>
<name>PHEA_MYCSS</name>
<reference key="1">
    <citation type="submission" date="2006-06" db="EMBL/GenBank/DDBJ databases">
        <title>Complete sequence of chromosome of Mycobacterium sp. MCS.</title>
        <authorList>
            <consortium name="US DOE Joint Genome Institute"/>
            <person name="Copeland A."/>
            <person name="Lucas S."/>
            <person name="Lapidus A."/>
            <person name="Barry K."/>
            <person name="Detter J.C."/>
            <person name="Glavina del Rio T."/>
            <person name="Hammon N."/>
            <person name="Israni S."/>
            <person name="Dalin E."/>
            <person name="Tice H."/>
            <person name="Pitluck S."/>
            <person name="Martinez M."/>
            <person name="Schmutz J."/>
            <person name="Larimer F."/>
            <person name="Land M."/>
            <person name="Hauser L."/>
            <person name="Kyrpides N."/>
            <person name="Kim E."/>
            <person name="Miller C.D."/>
            <person name="Hughes J.E."/>
            <person name="Anderson A.J."/>
            <person name="Sims R.C."/>
            <person name="Richardson P."/>
        </authorList>
    </citation>
    <scope>NUCLEOTIDE SEQUENCE [LARGE SCALE GENOMIC DNA]</scope>
    <source>
        <strain>MCS</strain>
    </source>
</reference>
<comment type="catalytic activity">
    <reaction>
        <text>prephenate + H(+) = 3-phenylpyruvate + CO2 + H2O</text>
        <dbReference type="Rhea" id="RHEA:21648"/>
        <dbReference type="ChEBI" id="CHEBI:15377"/>
        <dbReference type="ChEBI" id="CHEBI:15378"/>
        <dbReference type="ChEBI" id="CHEBI:16526"/>
        <dbReference type="ChEBI" id="CHEBI:18005"/>
        <dbReference type="ChEBI" id="CHEBI:29934"/>
        <dbReference type="EC" id="4.2.1.51"/>
    </reaction>
</comment>
<comment type="pathway">
    <text>Amino-acid biosynthesis; L-phenylalanine biosynthesis; phenylpyruvate from prephenate: step 1/1.</text>
</comment>
<comment type="subunit">
    <text evidence="1">Homodimer.</text>
</comment>
<keyword id="KW-0028">Amino-acid biosynthesis</keyword>
<keyword id="KW-0057">Aromatic amino acid biosynthesis</keyword>
<keyword id="KW-0456">Lyase</keyword>
<keyword id="KW-0584">Phenylalanine biosynthesis</keyword>
<organism>
    <name type="scientific">Mycobacterium sp. (strain MCS)</name>
    <dbReference type="NCBI Taxonomy" id="164756"/>
    <lineage>
        <taxon>Bacteria</taxon>
        <taxon>Bacillati</taxon>
        <taxon>Actinomycetota</taxon>
        <taxon>Actinomycetes</taxon>
        <taxon>Mycobacteriales</taxon>
        <taxon>Mycobacteriaceae</taxon>
        <taxon>Mycobacterium</taxon>
    </lineage>
</organism>
<dbReference type="EC" id="4.2.1.51"/>
<dbReference type="EMBL" id="CP000384">
    <property type="protein sequence ID" value="ABG11138.1"/>
    <property type="molecule type" value="Genomic_DNA"/>
</dbReference>
<dbReference type="SMR" id="Q1B1U6"/>
<dbReference type="KEGG" id="mmc:Mmcs_5034"/>
<dbReference type="HOGENOM" id="CLU_035008_0_0_11"/>
<dbReference type="BioCyc" id="MSP164756:G1G6O-5147-MONOMER"/>
<dbReference type="UniPathway" id="UPA00121">
    <property type="reaction ID" value="UER00345"/>
</dbReference>
<dbReference type="GO" id="GO:0005737">
    <property type="term" value="C:cytoplasm"/>
    <property type="evidence" value="ECO:0007669"/>
    <property type="project" value="TreeGrafter"/>
</dbReference>
<dbReference type="GO" id="GO:0004664">
    <property type="term" value="F:prephenate dehydratase activity"/>
    <property type="evidence" value="ECO:0007669"/>
    <property type="project" value="UniProtKB-EC"/>
</dbReference>
<dbReference type="GO" id="GO:0042803">
    <property type="term" value="F:protein homodimerization activity"/>
    <property type="evidence" value="ECO:0000250"/>
    <property type="project" value="UniProtKB"/>
</dbReference>
<dbReference type="GO" id="GO:0009094">
    <property type="term" value="P:L-phenylalanine biosynthetic process"/>
    <property type="evidence" value="ECO:0007669"/>
    <property type="project" value="UniProtKB-UniPathway"/>
</dbReference>
<dbReference type="CDD" id="cd04905">
    <property type="entry name" value="ACT_CM-PDT"/>
    <property type="match status" value="1"/>
</dbReference>
<dbReference type="CDD" id="cd13632">
    <property type="entry name" value="PBP2_Aa-PDT_like"/>
    <property type="match status" value="1"/>
</dbReference>
<dbReference type="FunFam" id="3.30.70.260:FF:000012">
    <property type="entry name" value="Prephenate dehydratase"/>
    <property type="match status" value="1"/>
</dbReference>
<dbReference type="FunFam" id="3.40.190.10:FF:000064">
    <property type="entry name" value="Prephenate dehydratase"/>
    <property type="match status" value="1"/>
</dbReference>
<dbReference type="FunFam" id="3.40.190.10:FF:000146">
    <property type="entry name" value="Prephenate dehydratase"/>
    <property type="match status" value="1"/>
</dbReference>
<dbReference type="Gene3D" id="3.30.70.260">
    <property type="match status" value="1"/>
</dbReference>
<dbReference type="Gene3D" id="3.40.190.10">
    <property type="entry name" value="Periplasmic binding protein-like II"/>
    <property type="match status" value="2"/>
</dbReference>
<dbReference type="InterPro" id="IPR045865">
    <property type="entry name" value="ACT-like_dom_sf"/>
</dbReference>
<dbReference type="InterPro" id="IPR002912">
    <property type="entry name" value="ACT_dom"/>
</dbReference>
<dbReference type="InterPro" id="IPR008242">
    <property type="entry name" value="Chor_mutase/pphenate_deHydtase"/>
</dbReference>
<dbReference type="InterPro" id="IPR001086">
    <property type="entry name" value="Preph_deHydtase"/>
</dbReference>
<dbReference type="InterPro" id="IPR018528">
    <property type="entry name" value="Preph_deHydtase_CS"/>
</dbReference>
<dbReference type="NCBIfam" id="NF008865">
    <property type="entry name" value="PRK11898.1"/>
    <property type="match status" value="1"/>
</dbReference>
<dbReference type="PANTHER" id="PTHR21022">
    <property type="entry name" value="PREPHENATE DEHYDRATASE P PROTEIN"/>
    <property type="match status" value="1"/>
</dbReference>
<dbReference type="PANTHER" id="PTHR21022:SF19">
    <property type="entry name" value="PREPHENATE DEHYDRATASE-RELATED"/>
    <property type="match status" value="1"/>
</dbReference>
<dbReference type="Pfam" id="PF01842">
    <property type="entry name" value="ACT"/>
    <property type="match status" value="1"/>
</dbReference>
<dbReference type="Pfam" id="PF00800">
    <property type="entry name" value="PDT"/>
    <property type="match status" value="1"/>
</dbReference>
<dbReference type="PIRSF" id="PIRSF001500">
    <property type="entry name" value="Chor_mut_pdt_Ppr"/>
    <property type="match status" value="1"/>
</dbReference>
<dbReference type="SUPFAM" id="SSF55021">
    <property type="entry name" value="ACT-like"/>
    <property type="match status" value="1"/>
</dbReference>
<dbReference type="SUPFAM" id="SSF53850">
    <property type="entry name" value="Periplasmic binding protein-like II"/>
    <property type="match status" value="1"/>
</dbReference>
<dbReference type="PROSITE" id="PS51671">
    <property type="entry name" value="ACT"/>
    <property type="match status" value="1"/>
</dbReference>
<dbReference type="PROSITE" id="PS00857">
    <property type="entry name" value="PREPHENATE_DEHYDR_1"/>
    <property type="match status" value="1"/>
</dbReference>
<dbReference type="PROSITE" id="PS00858">
    <property type="entry name" value="PREPHENATE_DEHYDR_2"/>
    <property type="match status" value="1"/>
</dbReference>
<dbReference type="PROSITE" id="PS51171">
    <property type="entry name" value="PREPHENATE_DEHYDR_3"/>
    <property type="match status" value="1"/>
</dbReference>
<evidence type="ECO:0000250" key="1"/>
<evidence type="ECO:0000255" key="2">
    <source>
        <dbReference type="PROSITE-ProRule" id="PRU00517"/>
    </source>
</evidence>
<evidence type="ECO:0000255" key="3">
    <source>
        <dbReference type="PROSITE-ProRule" id="PRU01007"/>
    </source>
</evidence>